<accession>B5R610</accession>
<gene>
    <name evidence="1" type="primary">recR</name>
    <name type="ordered locus">SG0496</name>
</gene>
<sequence length="201" mass="21715">MQTSPLLTQLMEALRCLPGVGPKSAQRMAFTLLQRDRSGGMRLAQALTRAMSEIGHCADCRTFTEQDVCNICSNPRRQENGQICVVESPADIYAIEQTGQFSGRYFVLMGHLSPLDGIGPDDIGLDRLEQRLASEKISELILATNPTVEGEATANYIAELCAEAGVEASRIAHGVPVGGELEMVDGTTLSHSLAGRHKIIF</sequence>
<reference key="1">
    <citation type="journal article" date="2008" name="Genome Res.">
        <title>Comparative genome analysis of Salmonella enteritidis PT4 and Salmonella gallinarum 287/91 provides insights into evolutionary and host adaptation pathways.</title>
        <authorList>
            <person name="Thomson N.R."/>
            <person name="Clayton D.J."/>
            <person name="Windhorst D."/>
            <person name="Vernikos G."/>
            <person name="Davidson S."/>
            <person name="Churcher C."/>
            <person name="Quail M.A."/>
            <person name="Stevens M."/>
            <person name="Jones M.A."/>
            <person name="Watson M."/>
            <person name="Barron A."/>
            <person name="Layton A."/>
            <person name="Pickard D."/>
            <person name="Kingsley R.A."/>
            <person name="Bignell A."/>
            <person name="Clark L."/>
            <person name="Harris B."/>
            <person name="Ormond D."/>
            <person name="Abdellah Z."/>
            <person name="Brooks K."/>
            <person name="Cherevach I."/>
            <person name="Chillingworth T."/>
            <person name="Woodward J."/>
            <person name="Norberczak H."/>
            <person name="Lord A."/>
            <person name="Arrowsmith C."/>
            <person name="Jagels K."/>
            <person name="Moule S."/>
            <person name="Mungall K."/>
            <person name="Saunders M."/>
            <person name="Whitehead S."/>
            <person name="Chabalgoity J.A."/>
            <person name="Maskell D."/>
            <person name="Humphreys T."/>
            <person name="Roberts M."/>
            <person name="Barrow P.A."/>
            <person name="Dougan G."/>
            <person name="Parkhill J."/>
        </authorList>
    </citation>
    <scope>NUCLEOTIDE SEQUENCE [LARGE SCALE GENOMIC DNA]</scope>
    <source>
        <strain>287/91 / NCTC 13346</strain>
    </source>
</reference>
<organism>
    <name type="scientific">Salmonella gallinarum (strain 287/91 / NCTC 13346)</name>
    <dbReference type="NCBI Taxonomy" id="550538"/>
    <lineage>
        <taxon>Bacteria</taxon>
        <taxon>Pseudomonadati</taxon>
        <taxon>Pseudomonadota</taxon>
        <taxon>Gammaproteobacteria</taxon>
        <taxon>Enterobacterales</taxon>
        <taxon>Enterobacteriaceae</taxon>
        <taxon>Salmonella</taxon>
    </lineage>
</organism>
<dbReference type="EMBL" id="AM933173">
    <property type="protein sequence ID" value="CAR36395.1"/>
    <property type="molecule type" value="Genomic_DNA"/>
</dbReference>
<dbReference type="RefSeq" id="WP_001195023.1">
    <property type="nucleotide sequence ID" value="NC_011274.1"/>
</dbReference>
<dbReference type="SMR" id="B5R610"/>
<dbReference type="KEGG" id="seg:SG0496"/>
<dbReference type="HOGENOM" id="CLU_060739_1_2_6"/>
<dbReference type="Proteomes" id="UP000008321">
    <property type="component" value="Chromosome"/>
</dbReference>
<dbReference type="GO" id="GO:0003677">
    <property type="term" value="F:DNA binding"/>
    <property type="evidence" value="ECO:0007669"/>
    <property type="project" value="UniProtKB-UniRule"/>
</dbReference>
<dbReference type="GO" id="GO:0008270">
    <property type="term" value="F:zinc ion binding"/>
    <property type="evidence" value="ECO:0007669"/>
    <property type="project" value="UniProtKB-KW"/>
</dbReference>
<dbReference type="GO" id="GO:0006310">
    <property type="term" value="P:DNA recombination"/>
    <property type="evidence" value="ECO:0007669"/>
    <property type="project" value="UniProtKB-UniRule"/>
</dbReference>
<dbReference type="GO" id="GO:0006281">
    <property type="term" value="P:DNA repair"/>
    <property type="evidence" value="ECO:0007669"/>
    <property type="project" value="UniProtKB-UniRule"/>
</dbReference>
<dbReference type="CDD" id="cd01025">
    <property type="entry name" value="TOPRIM_recR"/>
    <property type="match status" value="1"/>
</dbReference>
<dbReference type="FunFam" id="1.10.8.420:FF:000001">
    <property type="entry name" value="Recombination protein RecR"/>
    <property type="match status" value="1"/>
</dbReference>
<dbReference type="FunFam" id="3.40.1360.10:FF:000001">
    <property type="entry name" value="Recombination protein RecR"/>
    <property type="match status" value="1"/>
</dbReference>
<dbReference type="Gene3D" id="3.40.1360.10">
    <property type="match status" value="1"/>
</dbReference>
<dbReference type="Gene3D" id="6.10.250.240">
    <property type="match status" value="1"/>
</dbReference>
<dbReference type="Gene3D" id="1.10.8.420">
    <property type="entry name" value="RecR Domain 1"/>
    <property type="match status" value="1"/>
</dbReference>
<dbReference type="HAMAP" id="MF_00017">
    <property type="entry name" value="RecR"/>
    <property type="match status" value="1"/>
</dbReference>
<dbReference type="InterPro" id="IPR000093">
    <property type="entry name" value="DNA_Rcmb_RecR"/>
</dbReference>
<dbReference type="InterPro" id="IPR023627">
    <property type="entry name" value="Rcmb_RecR"/>
</dbReference>
<dbReference type="InterPro" id="IPR015967">
    <property type="entry name" value="Rcmb_RecR_Znf"/>
</dbReference>
<dbReference type="InterPro" id="IPR006171">
    <property type="entry name" value="TOPRIM_dom"/>
</dbReference>
<dbReference type="InterPro" id="IPR034137">
    <property type="entry name" value="TOPRIM_RecR"/>
</dbReference>
<dbReference type="NCBIfam" id="TIGR00615">
    <property type="entry name" value="recR"/>
    <property type="match status" value="1"/>
</dbReference>
<dbReference type="PANTHER" id="PTHR30446">
    <property type="entry name" value="RECOMBINATION PROTEIN RECR"/>
    <property type="match status" value="1"/>
</dbReference>
<dbReference type="PANTHER" id="PTHR30446:SF0">
    <property type="entry name" value="RECOMBINATION PROTEIN RECR"/>
    <property type="match status" value="1"/>
</dbReference>
<dbReference type="Pfam" id="PF21175">
    <property type="entry name" value="RecR_C"/>
    <property type="match status" value="1"/>
</dbReference>
<dbReference type="Pfam" id="PF21176">
    <property type="entry name" value="RecR_HhH"/>
    <property type="match status" value="1"/>
</dbReference>
<dbReference type="Pfam" id="PF02132">
    <property type="entry name" value="RecR_ZnF"/>
    <property type="match status" value="1"/>
</dbReference>
<dbReference type="Pfam" id="PF13662">
    <property type="entry name" value="Toprim_4"/>
    <property type="match status" value="1"/>
</dbReference>
<dbReference type="SMART" id="SM00493">
    <property type="entry name" value="TOPRIM"/>
    <property type="match status" value="1"/>
</dbReference>
<dbReference type="SUPFAM" id="SSF111304">
    <property type="entry name" value="Recombination protein RecR"/>
    <property type="match status" value="1"/>
</dbReference>
<dbReference type="PROSITE" id="PS01300">
    <property type="entry name" value="RECR"/>
    <property type="match status" value="1"/>
</dbReference>
<dbReference type="PROSITE" id="PS50880">
    <property type="entry name" value="TOPRIM"/>
    <property type="match status" value="1"/>
</dbReference>
<comment type="function">
    <text evidence="1">May play a role in DNA repair. It seems to be involved in an RecBC-independent recombinational process of DNA repair. It may act with RecF and RecO.</text>
</comment>
<comment type="similarity">
    <text evidence="1">Belongs to the RecR family.</text>
</comment>
<feature type="chain" id="PRO_1000089765" description="Recombination protein RecR">
    <location>
        <begin position="1"/>
        <end position="201"/>
    </location>
</feature>
<feature type="domain" description="Toprim" evidence="1">
    <location>
        <begin position="81"/>
        <end position="176"/>
    </location>
</feature>
<feature type="zinc finger region" description="C4-type" evidence="1">
    <location>
        <begin position="57"/>
        <end position="72"/>
    </location>
</feature>
<name>RECR_SALG2</name>
<evidence type="ECO:0000255" key="1">
    <source>
        <dbReference type="HAMAP-Rule" id="MF_00017"/>
    </source>
</evidence>
<proteinExistence type="inferred from homology"/>
<keyword id="KW-0227">DNA damage</keyword>
<keyword id="KW-0233">DNA recombination</keyword>
<keyword id="KW-0234">DNA repair</keyword>
<keyword id="KW-0479">Metal-binding</keyword>
<keyword id="KW-0862">Zinc</keyword>
<keyword id="KW-0863">Zinc-finger</keyword>
<protein>
    <recommendedName>
        <fullName evidence="1">Recombination protein RecR</fullName>
    </recommendedName>
</protein>